<name>IF11_CHRVO</name>
<gene>
    <name evidence="1" type="primary">infA1</name>
    <name type="ordered locus">CV_1898</name>
</gene>
<organism>
    <name type="scientific">Chromobacterium violaceum (strain ATCC 12472 / DSM 30191 / JCM 1249 / CCUG 213 / NBRC 12614 / NCIMB 9131 / NCTC 9757 / MK)</name>
    <dbReference type="NCBI Taxonomy" id="243365"/>
    <lineage>
        <taxon>Bacteria</taxon>
        <taxon>Pseudomonadati</taxon>
        <taxon>Pseudomonadota</taxon>
        <taxon>Betaproteobacteria</taxon>
        <taxon>Neisseriales</taxon>
        <taxon>Chromobacteriaceae</taxon>
        <taxon>Chromobacterium</taxon>
    </lineage>
</organism>
<accession>Q7NWT1</accession>
<dbReference type="EMBL" id="AE016825">
    <property type="protein sequence ID" value="AAQ59572.1"/>
    <property type="molecule type" value="Genomic_DNA"/>
</dbReference>
<dbReference type="RefSeq" id="WP_011135450.1">
    <property type="nucleotide sequence ID" value="NC_005085.1"/>
</dbReference>
<dbReference type="SMR" id="Q7NWT1"/>
<dbReference type="STRING" id="243365.CV_1898"/>
<dbReference type="GeneID" id="66367563"/>
<dbReference type="KEGG" id="cvi:CV_1898"/>
<dbReference type="eggNOG" id="COG0361">
    <property type="taxonomic scope" value="Bacteria"/>
</dbReference>
<dbReference type="HOGENOM" id="CLU_151267_1_0_4"/>
<dbReference type="OrthoDB" id="9803250at2"/>
<dbReference type="Proteomes" id="UP000001424">
    <property type="component" value="Chromosome"/>
</dbReference>
<dbReference type="GO" id="GO:0005829">
    <property type="term" value="C:cytosol"/>
    <property type="evidence" value="ECO:0007669"/>
    <property type="project" value="TreeGrafter"/>
</dbReference>
<dbReference type="GO" id="GO:0043022">
    <property type="term" value="F:ribosome binding"/>
    <property type="evidence" value="ECO:0007669"/>
    <property type="project" value="UniProtKB-UniRule"/>
</dbReference>
<dbReference type="GO" id="GO:0019843">
    <property type="term" value="F:rRNA binding"/>
    <property type="evidence" value="ECO:0007669"/>
    <property type="project" value="UniProtKB-UniRule"/>
</dbReference>
<dbReference type="GO" id="GO:0003743">
    <property type="term" value="F:translation initiation factor activity"/>
    <property type="evidence" value="ECO:0007669"/>
    <property type="project" value="UniProtKB-UniRule"/>
</dbReference>
<dbReference type="CDD" id="cd04451">
    <property type="entry name" value="S1_IF1"/>
    <property type="match status" value="1"/>
</dbReference>
<dbReference type="FunFam" id="2.40.50.140:FF:000002">
    <property type="entry name" value="Translation initiation factor IF-1"/>
    <property type="match status" value="1"/>
</dbReference>
<dbReference type="Gene3D" id="2.40.50.140">
    <property type="entry name" value="Nucleic acid-binding proteins"/>
    <property type="match status" value="1"/>
</dbReference>
<dbReference type="HAMAP" id="MF_00075">
    <property type="entry name" value="IF_1"/>
    <property type="match status" value="1"/>
</dbReference>
<dbReference type="InterPro" id="IPR012340">
    <property type="entry name" value="NA-bd_OB-fold"/>
</dbReference>
<dbReference type="InterPro" id="IPR006196">
    <property type="entry name" value="RNA-binding_domain_S1_IF1"/>
</dbReference>
<dbReference type="InterPro" id="IPR003029">
    <property type="entry name" value="S1_domain"/>
</dbReference>
<dbReference type="InterPro" id="IPR004368">
    <property type="entry name" value="TIF_IF1"/>
</dbReference>
<dbReference type="NCBIfam" id="TIGR00008">
    <property type="entry name" value="infA"/>
    <property type="match status" value="1"/>
</dbReference>
<dbReference type="PANTHER" id="PTHR33370">
    <property type="entry name" value="TRANSLATION INITIATION FACTOR IF-1, CHLOROPLASTIC"/>
    <property type="match status" value="1"/>
</dbReference>
<dbReference type="PANTHER" id="PTHR33370:SF1">
    <property type="entry name" value="TRANSLATION INITIATION FACTOR IF-1, CHLOROPLASTIC"/>
    <property type="match status" value="1"/>
</dbReference>
<dbReference type="Pfam" id="PF01176">
    <property type="entry name" value="eIF-1a"/>
    <property type="match status" value="1"/>
</dbReference>
<dbReference type="SMART" id="SM00316">
    <property type="entry name" value="S1"/>
    <property type="match status" value="1"/>
</dbReference>
<dbReference type="SUPFAM" id="SSF50249">
    <property type="entry name" value="Nucleic acid-binding proteins"/>
    <property type="match status" value="1"/>
</dbReference>
<dbReference type="PROSITE" id="PS50832">
    <property type="entry name" value="S1_IF1_TYPE"/>
    <property type="match status" value="1"/>
</dbReference>
<reference key="1">
    <citation type="journal article" date="2003" name="Proc. Natl. Acad. Sci. U.S.A.">
        <title>The complete genome sequence of Chromobacterium violaceum reveals remarkable and exploitable bacterial adaptability.</title>
        <authorList>
            <person name="Vasconcelos A.T.R."/>
            <person name="de Almeida D.F."/>
            <person name="Hungria M."/>
            <person name="Guimaraes C.T."/>
            <person name="Antonio R.V."/>
            <person name="Almeida F.C."/>
            <person name="de Almeida L.G.P."/>
            <person name="de Almeida R."/>
            <person name="Alves-Gomes J.A."/>
            <person name="Andrade E.M."/>
            <person name="Araripe J."/>
            <person name="de Araujo M.F.F."/>
            <person name="Astolfi-Filho S."/>
            <person name="Azevedo V."/>
            <person name="Baptista A.J."/>
            <person name="Bataus L.A.M."/>
            <person name="Batista J.S."/>
            <person name="Belo A."/>
            <person name="van den Berg C."/>
            <person name="Bogo M."/>
            <person name="Bonatto S."/>
            <person name="Bordignon J."/>
            <person name="Brigido M.M."/>
            <person name="Brito C.A."/>
            <person name="Brocchi M."/>
            <person name="Burity H.A."/>
            <person name="Camargo A.A."/>
            <person name="Cardoso D.D.P."/>
            <person name="Carneiro N.P."/>
            <person name="Carraro D.M."/>
            <person name="Carvalho C.M.B."/>
            <person name="Cascardo J.C.M."/>
            <person name="Cavada B.S."/>
            <person name="Chueire L.M.O."/>
            <person name="Creczynski-Pasa T.B."/>
            <person name="Cunha-Junior N.C."/>
            <person name="Fagundes N."/>
            <person name="Falcao C.L."/>
            <person name="Fantinatti F."/>
            <person name="Farias I.P."/>
            <person name="Felipe M.S.S."/>
            <person name="Ferrari L.P."/>
            <person name="Ferro J.A."/>
            <person name="Ferro M.I.T."/>
            <person name="Franco G.R."/>
            <person name="Freitas N.S.A."/>
            <person name="Furlan L.R."/>
            <person name="Gazzinelli R.T."/>
            <person name="Gomes E.A."/>
            <person name="Goncalves P.R."/>
            <person name="Grangeiro T.B."/>
            <person name="Grattapaglia D."/>
            <person name="Grisard E.C."/>
            <person name="Hanna E.S."/>
            <person name="Jardim S.N."/>
            <person name="Laurino J."/>
            <person name="Leoi L.C.T."/>
            <person name="Lima L.F.A."/>
            <person name="Loureiro M.F."/>
            <person name="Lyra M.C.C.P."/>
            <person name="Madeira H.M.F."/>
            <person name="Manfio G.P."/>
            <person name="Maranhao A.Q."/>
            <person name="Martins W.S."/>
            <person name="di Mauro S.M.Z."/>
            <person name="de Medeiros S.R.B."/>
            <person name="Meissner R.V."/>
            <person name="Moreira M.A.M."/>
            <person name="Nascimento F.F."/>
            <person name="Nicolas M.F."/>
            <person name="Oliveira J.G."/>
            <person name="Oliveira S.C."/>
            <person name="Paixao R.F.C."/>
            <person name="Parente J.A."/>
            <person name="Pedrosa F.O."/>
            <person name="Pena S.D.J."/>
            <person name="Pereira J.O."/>
            <person name="Pereira M."/>
            <person name="Pinto L.S.R.C."/>
            <person name="Pinto L.S."/>
            <person name="Porto J.I.R."/>
            <person name="Potrich D.P."/>
            <person name="Ramalho-Neto C.E."/>
            <person name="Reis A.M.M."/>
            <person name="Rigo L.U."/>
            <person name="Rondinelli E."/>
            <person name="Santos E.B.P."/>
            <person name="Santos F.R."/>
            <person name="Schneider M.P.C."/>
            <person name="Seuanez H.N."/>
            <person name="Silva A.M.R."/>
            <person name="da Silva A.L.C."/>
            <person name="Silva D.W."/>
            <person name="Silva R."/>
            <person name="Simoes I.C."/>
            <person name="Simon D."/>
            <person name="Soares C.M.A."/>
            <person name="Soares R.B.A."/>
            <person name="Souza E.M."/>
            <person name="Souza K.R.L."/>
            <person name="Souza R.C."/>
            <person name="Steffens M.B.R."/>
            <person name="Steindel M."/>
            <person name="Teixeira S.R."/>
            <person name="Urmenyi T."/>
            <person name="Vettore A."/>
            <person name="Wassem R."/>
            <person name="Zaha A."/>
            <person name="Simpson A.J.G."/>
        </authorList>
    </citation>
    <scope>NUCLEOTIDE SEQUENCE [LARGE SCALE GENOMIC DNA]</scope>
    <source>
        <strain>ATCC 12472 / DSM 30191 / JCM 1249 / CCUG 213 / NBRC 12614 / NCIMB 9131 / NCTC 9757 / MK</strain>
    </source>
</reference>
<sequence>MSKEDMIELEGVVIEMLPESRFRVRLDNNMEILAYGSGKMKMHRIRVLLGDRVTVEMSPYDLTKGRINFRHPTANPGAGPRPSHHHRR</sequence>
<evidence type="ECO:0000255" key="1">
    <source>
        <dbReference type="HAMAP-Rule" id="MF_00075"/>
    </source>
</evidence>
<evidence type="ECO:0000256" key="2">
    <source>
        <dbReference type="SAM" id="MobiDB-lite"/>
    </source>
</evidence>
<comment type="function">
    <text evidence="1">One of the essential components for the initiation of protein synthesis. Stabilizes the binding of IF-2 and IF-3 on the 30S subunit to which N-formylmethionyl-tRNA(fMet) subsequently binds. Helps modulate mRNA selection, yielding the 30S pre-initiation complex (PIC). Upon addition of the 50S ribosomal subunit IF-1, IF-2 and IF-3 are released leaving the mature 70S translation initiation complex.</text>
</comment>
<comment type="subunit">
    <text evidence="1">Component of the 30S ribosomal translation pre-initiation complex which assembles on the 30S ribosome in the order IF-2 and IF-3, IF-1 and N-formylmethionyl-tRNA(fMet); mRNA recruitment can occur at any time during PIC assembly.</text>
</comment>
<comment type="subcellular location">
    <subcellularLocation>
        <location evidence="1">Cytoplasm</location>
    </subcellularLocation>
</comment>
<comment type="similarity">
    <text evidence="1">Belongs to the IF-1 family.</text>
</comment>
<proteinExistence type="inferred from homology"/>
<keyword id="KW-0963">Cytoplasm</keyword>
<keyword id="KW-0396">Initiation factor</keyword>
<keyword id="KW-0648">Protein biosynthesis</keyword>
<keyword id="KW-1185">Reference proteome</keyword>
<keyword id="KW-0694">RNA-binding</keyword>
<keyword id="KW-0699">rRNA-binding</keyword>
<protein>
    <recommendedName>
        <fullName evidence="1">Translation initiation factor IF-1 1</fullName>
    </recommendedName>
</protein>
<feature type="chain" id="PRO_0000095773" description="Translation initiation factor IF-1 1">
    <location>
        <begin position="1"/>
        <end position="88"/>
    </location>
</feature>
<feature type="domain" description="S1-like" evidence="1">
    <location>
        <begin position="1"/>
        <end position="72"/>
    </location>
</feature>
<feature type="region of interest" description="Disordered" evidence="2">
    <location>
        <begin position="66"/>
        <end position="88"/>
    </location>
</feature>